<organism>
    <name type="scientific">Rattus norvegicus</name>
    <name type="common">Rat</name>
    <dbReference type="NCBI Taxonomy" id="10116"/>
    <lineage>
        <taxon>Eukaryota</taxon>
        <taxon>Metazoa</taxon>
        <taxon>Chordata</taxon>
        <taxon>Craniata</taxon>
        <taxon>Vertebrata</taxon>
        <taxon>Euteleostomi</taxon>
        <taxon>Mammalia</taxon>
        <taxon>Eutheria</taxon>
        <taxon>Euarchontoglires</taxon>
        <taxon>Glires</taxon>
        <taxon>Rodentia</taxon>
        <taxon>Myomorpha</taxon>
        <taxon>Muroidea</taxon>
        <taxon>Muridae</taxon>
        <taxon>Murinae</taxon>
        <taxon>Rattus</taxon>
    </lineage>
</organism>
<proteinExistence type="predicted"/>
<reference key="1">
    <citation type="journal article" date="1987" name="Gene">
        <title>The immunoglobulin lambda locus in rat consists of two C lambda genes and a single V lambda gene.</title>
        <authorList>
            <person name="Steen M.L."/>
            <person name="Hellman L."/>
            <person name="Pettersson U."/>
        </authorList>
    </citation>
    <scope>NUCLEOTIDE SEQUENCE [GENOMIC DNA]</scope>
</reference>
<keyword id="KW-1015">Disulfide bond</keyword>
<keyword id="KW-0393">Immunoglobulin domain</keyword>
<keyword id="KW-1185">Reference proteome</keyword>
<name>LAC1_RAT</name>
<dbReference type="EMBL" id="M22520">
    <property type="protein sequence ID" value="AAA41419.1"/>
    <property type="status" value="ALT_INIT"/>
    <property type="molecule type" value="Genomic_DNA"/>
</dbReference>
<dbReference type="PIR" id="A27390">
    <property type="entry name" value="A27390"/>
</dbReference>
<dbReference type="SMR" id="P20766"/>
<dbReference type="FunCoup" id="P20766">
    <property type="interactions" value="54"/>
</dbReference>
<dbReference type="STRING" id="10116.ENSRNOP00000074645"/>
<dbReference type="PaxDb" id="10116-ENSRNOP00000054780"/>
<dbReference type="ABCD" id="P20766">
    <property type="antibodies" value="1 sequenced antibody"/>
</dbReference>
<dbReference type="Ensembl" id="ENSRNOT00000057971.5">
    <property type="protein sequence ID" value="ENSRNOP00000054780.5"/>
    <property type="gene ID" value="ENSRNOG00000050000.3"/>
</dbReference>
<dbReference type="AGR" id="RGD:2319568"/>
<dbReference type="RGD" id="1564318">
    <property type="gene designation" value="RGD1564318"/>
</dbReference>
<dbReference type="eggNOG" id="ENOG502TFGC">
    <property type="taxonomic scope" value="Eukaryota"/>
</dbReference>
<dbReference type="GeneTree" id="ENSGT00940000153307"/>
<dbReference type="HOGENOM" id="CLU_077975_6_3_1"/>
<dbReference type="InParanoid" id="P20766"/>
<dbReference type="PRO" id="PR:P20766"/>
<dbReference type="Proteomes" id="UP000002494">
    <property type="component" value="Chromosome 11"/>
</dbReference>
<dbReference type="GO" id="GO:0071735">
    <property type="term" value="C:IgG immunoglobulin complex"/>
    <property type="evidence" value="ECO:0000318"/>
    <property type="project" value="GO_Central"/>
</dbReference>
<dbReference type="GO" id="GO:0003823">
    <property type="term" value="F:antigen binding"/>
    <property type="evidence" value="ECO:0000318"/>
    <property type="project" value="GO_Central"/>
</dbReference>
<dbReference type="GO" id="GO:0016064">
    <property type="term" value="P:immunoglobulin mediated immune response"/>
    <property type="evidence" value="ECO:0000318"/>
    <property type="project" value="GO_Central"/>
</dbReference>
<dbReference type="CDD" id="cd07699">
    <property type="entry name" value="IgC1_L"/>
    <property type="match status" value="1"/>
</dbReference>
<dbReference type="FunFam" id="2.60.40.10:FF:000283">
    <property type="entry name" value="Immunoglobulin kappa constant"/>
    <property type="match status" value="1"/>
</dbReference>
<dbReference type="Gene3D" id="2.60.40.10">
    <property type="entry name" value="Immunoglobulins"/>
    <property type="match status" value="1"/>
</dbReference>
<dbReference type="InterPro" id="IPR007110">
    <property type="entry name" value="Ig-like_dom"/>
</dbReference>
<dbReference type="InterPro" id="IPR036179">
    <property type="entry name" value="Ig-like_dom_sf"/>
</dbReference>
<dbReference type="InterPro" id="IPR013783">
    <property type="entry name" value="Ig-like_fold"/>
</dbReference>
<dbReference type="InterPro" id="IPR003006">
    <property type="entry name" value="Ig/MHC_CS"/>
</dbReference>
<dbReference type="InterPro" id="IPR003597">
    <property type="entry name" value="Ig_C1-set"/>
</dbReference>
<dbReference type="InterPro" id="IPR050160">
    <property type="entry name" value="MHC/Immunoglobulin"/>
</dbReference>
<dbReference type="PANTHER" id="PTHR19944:SF98">
    <property type="entry name" value="IG-LIKE DOMAIN-CONTAINING PROTEIN"/>
    <property type="match status" value="1"/>
</dbReference>
<dbReference type="PANTHER" id="PTHR19944">
    <property type="entry name" value="MHC CLASS II-RELATED"/>
    <property type="match status" value="1"/>
</dbReference>
<dbReference type="Pfam" id="PF07654">
    <property type="entry name" value="C1-set"/>
    <property type="match status" value="1"/>
</dbReference>
<dbReference type="SMART" id="SM00407">
    <property type="entry name" value="IGc1"/>
    <property type="match status" value="1"/>
</dbReference>
<dbReference type="SUPFAM" id="SSF48726">
    <property type="entry name" value="Immunoglobulin"/>
    <property type="match status" value="1"/>
</dbReference>
<dbReference type="PROSITE" id="PS50835">
    <property type="entry name" value="IG_LIKE"/>
    <property type="match status" value="1"/>
</dbReference>
<dbReference type="PROSITE" id="PS00290">
    <property type="entry name" value="IG_MHC"/>
    <property type="match status" value="1"/>
</dbReference>
<protein>
    <recommendedName>
        <fullName>Ig lambda-1 chain C region</fullName>
    </recommendedName>
</protein>
<accession>P20766</accession>
<sequence>QPKATPSVTLFPPSSEELKTDKATLVCMVTDFYPGVMTVVWKADGTPITQGVETTQPFKQNNKYMATSYLLLTAKAWETHSNYSCQVTHEENTVEKSLSRAECS</sequence>
<evidence type="ECO:0000255" key="1">
    <source>
        <dbReference type="PROSITE-ProRule" id="PRU00114"/>
    </source>
</evidence>
<evidence type="ECO:0000305" key="2"/>
<feature type="chain" id="PRO_0000153615" description="Ig lambda-1 chain C region">
    <location>
        <begin position="1" status="less than"/>
        <end position="104"/>
    </location>
</feature>
<feature type="domain" description="Ig-like">
    <location>
        <begin position="6"/>
        <end position="99"/>
    </location>
</feature>
<feature type="disulfide bond" evidence="1">
    <location>
        <begin position="27"/>
        <end position="85"/>
    </location>
</feature>
<feature type="disulfide bond" description="Interchain (with heavy chain)" evidence="1">
    <location>
        <position position="103"/>
    </location>
</feature>
<feature type="non-terminal residue">
    <location>
        <position position="1"/>
    </location>
</feature>
<comment type="sequence caution" evidence="2">
    <conflict type="erroneous initiation">
        <sequence resource="EMBL-CDS" id="AAA41419"/>
    </conflict>
</comment>